<feature type="chain" id="PRO_1000044968" description="N(4)-acetylcytidine amidohydrolase">
    <location>
        <begin position="1"/>
        <end position="102"/>
    </location>
</feature>
<feature type="domain" description="ASCH" evidence="1">
    <location>
        <begin position="6"/>
        <end position="92"/>
    </location>
</feature>
<feature type="active site" description="Proton acceptor" evidence="2">
    <location>
        <position position="20"/>
    </location>
</feature>
<feature type="active site" description="Nucleophile" evidence="2">
    <location>
        <position position="23"/>
    </location>
</feature>
<feature type="active site" description="Proton donor" evidence="2">
    <location>
        <position position="73"/>
    </location>
</feature>
<dbReference type="EC" id="3.5.1.135" evidence="2"/>
<dbReference type="EMBL" id="BX936398">
    <property type="protein sequence ID" value="CAH20893.1"/>
    <property type="molecule type" value="Genomic_DNA"/>
</dbReference>
<dbReference type="SMR" id="Q66BW2"/>
<dbReference type="KEGG" id="ypo:BZ17_848"/>
<dbReference type="KEGG" id="yps:YPTB1654"/>
<dbReference type="PATRIC" id="fig|273123.14.peg.901"/>
<dbReference type="Proteomes" id="UP000001011">
    <property type="component" value="Chromosome"/>
</dbReference>
<dbReference type="GO" id="GO:0005829">
    <property type="term" value="C:cytosol"/>
    <property type="evidence" value="ECO:0007669"/>
    <property type="project" value="TreeGrafter"/>
</dbReference>
<dbReference type="GO" id="GO:0016813">
    <property type="term" value="F:hydrolase activity, acting on carbon-nitrogen (but not peptide) bonds, in linear amidines"/>
    <property type="evidence" value="ECO:0007669"/>
    <property type="project" value="UniProtKB-UniRule"/>
</dbReference>
<dbReference type="GO" id="GO:0106251">
    <property type="term" value="F:N4-acetylcytidine amidohydrolase activity"/>
    <property type="evidence" value="ECO:0007669"/>
    <property type="project" value="RHEA"/>
</dbReference>
<dbReference type="CDD" id="cd06552">
    <property type="entry name" value="ASCH_yqfb_like"/>
    <property type="match status" value="1"/>
</dbReference>
<dbReference type="FunFam" id="2.30.130.30:FF:000001">
    <property type="entry name" value="UPF0267 protein YqfB"/>
    <property type="match status" value="1"/>
</dbReference>
<dbReference type="Gene3D" id="2.30.130.30">
    <property type="entry name" value="Hypothetical protein"/>
    <property type="match status" value="1"/>
</dbReference>
<dbReference type="HAMAP" id="MF_00684">
    <property type="entry name" value="ac4C_amidohydr"/>
    <property type="match status" value="1"/>
</dbReference>
<dbReference type="InterPro" id="IPR008314">
    <property type="entry name" value="AC4CH"/>
</dbReference>
<dbReference type="InterPro" id="IPR007374">
    <property type="entry name" value="ASCH_domain"/>
</dbReference>
<dbReference type="InterPro" id="IPR015947">
    <property type="entry name" value="PUA-like_sf"/>
</dbReference>
<dbReference type="NCBIfam" id="NF003443">
    <property type="entry name" value="PRK04980.1"/>
    <property type="match status" value="1"/>
</dbReference>
<dbReference type="PANTHER" id="PTHR38088">
    <property type="entry name" value="UCP029143 FAMILY PROTEIN"/>
    <property type="match status" value="1"/>
</dbReference>
<dbReference type="PANTHER" id="PTHR38088:SF2">
    <property type="entry name" value="UCP029143 FAMILY PROTEIN"/>
    <property type="match status" value="1"/>
</dbReference>
<dbReference type="Pfam" id="PF04266">
    <property type="entry name" value="ASCH"/>
    <property type="match status" value="1"/>
</dbReference>
<dbReference type="PIRSF" id="PIRSF029143">
    <property type="entry name" value="UCP029143"/>
    <property type="match status" value="1"/>
</dbReference>
<dbReference type="SMART" id="SM01022">
    <property type="entry name" value="ASCH"/>
    <property type="match status" value="1"/>
</dbReference>
<dbReference type="SUPFAM" id="SSF88697">
    <property type="entry name" value="PUA domain-like"/>
    <property type="match status" value="1"/>
</dbReference>
<sequence length="102" mass="11852">MNREITFFGRFEADILADRKTITIRDSSESDFRSGEVLRVCRNEDGVFFCHIKVKSVTPVTLDGLSERHAEQENMSLDELKKVIKAIYPGLDRFYVIEFTRC</sequence>
<organism>
    <name type="scientific">Yersinia pseudotuberculosis serotype I (strain IP32953)</name>
    <dbReference type="NCBI Taxonomy" id="273123"/>
    <lineage>
        <taxon>Bacteria</taxon>
        <taxon>Pseudomonadati</taxon>
        <taxon>Pseudomonadota</taxon>
        <taxon>Gammaproteobacteria</taxon>
        <taxon>Enterobacterales</taxon>
        <taxon>Yersiniaceae</taxon>
        <taxon>Yersinia</taxon>
    </lineage>
</organism>
<accession>Q66BW2</accession>
<keyword id="KW-0378">Hydrolase</keyword>
<name>AC4CH_YERPS</name>
<comment type="function">
    <text evidence="2">Catalyzes the hydrolysis of N(4)-acetylcytidine (ac4C).</text>
</comment>
<comment type="catalytic activity">
    <reaction evidence="2">
        <text>N(4)-acetylcytidine + H2O = cytidine + acetate + H(+)</text>
        <dbReference type="Rhea" id="RHEA:62932"/>
        <dbReference type="ChEBI" id="CHEBI:15377"/>
        <dbReference type="ChEBI" id="CHEBI:15378"/>
        <dbReference type="ChEBI" id="CHEBI:17562"/>
        <dbReference type="ChEBI" id="CHEBI:30089"/>
        <dbReference type="ChEBI" id="CHEBI:70989"/>
        <dbReference type="EC" id="3.5.1.135"/>
    </reaction>
</comment>
<comment type="catalytic activity">
    <reaction evidence="2">
        <text>N(4)-acetyl-2'-deoxycytidine + H2O = 2'-deoxycytidine + acetate + H(+)</text>
        <dbReference type="Rhea" id="RHEA:62936"/>
        <dbReference type="ChEBI" id="CHEBI:15377"/>
        <dbReference type="ChEBI" id="CHEBI:15378"/>
        <dbReference type="ChEBI" id="CHEBI:15698"/>
        <dbReference type="ChEBI" id="CHEBI:30089"/>
        <dbReference type="ChEBI" id="CHEBI:146133"/>
        <dbReference type="EC" id="3.5.1.135"/>
    </reaction>
</comment>
<comment type="catalytic activity">
    <reaction evidence="2">
        <text>N(4)-acetylcytosine + H2O = cytosine + acetate + H(+)</text>
        <dbReference type="Rhea" id="RHEA:62940"/>
        <dbReference type="ChEBI" id="CHEBI:15377"/>
        <dbReference type="ChEBI" id="CHEBI:15378"/>
        <dbReference type="ChEBI" id="CHEBI:16040"/>
        <dbReference type="ChEBI" id="CHEBI:30089"/>
        <dbReference type="ChEBI" id="CHEBI:146134"/>
        <dbReference type="EC" id="3.5.1.135"/>
    </reaction>
</comment>
<comment type="similarity">
    <text evidence="2">Belongs to the N(4)-acetylcytidine amidohydrolase family.</text>
</comment>
<protein>
    <recommendedName>
        <fullName evidence="2">N(4)-acetylcytidine amidohydrolase</fullName>
        <shortName evidence="2">ac4C amidohydrolase</shortName>
        <ecNumber evidence="2">3.5.1.135</ecNumber>
    </recommendedName>
</protein>
<gene>
    <name type="ordered locus">YPTB1654</name>
</gene>
<reference key="1">
    <citation type="journal article" date="2004" name="Proc. Natl. Acad. Sci. U.S.A.">
        <title>Insights into the evolution of Yersinia pestis through whole-genome comparison with Yersinia pseudotuberculosis.</title>
        <authorList>
            <person name="Chain P.S.G."/>
            <person name="Carniel E."/>
            <person name="Larimer F.W."/>
            <person name="Lamerdin J."/>
            <person name="Stoutland P.O."/>
            <person name="Regala W.M."/>
            <person name="Georgescu A.M."/>
            <person name="Vergez L.M."/>
            <person name="Land M.L."/>
            <person name="Motin V.L."/>
            <person name="Brubaker R.R."/>
            <person name="Fowler J."/>
            <person name="Hinnebusch J."/>
            <person name="Marceau M."/>
            <person name="Medigue C."/>
            <person name="Simonet M."/>
            <person name="Chenal-Francisque V."/>
            <person name="Souza B."/>
            <person name="Dacheux D."/>
            <person name="Elliott J.M."/>
            <person name="Derbise A."/>
            <person name="Hauser L.J."/>
            <person name="Garcia E."/>
        </authorList>
    </citation>
    <scope>NUCLEOTIDE SEQUENCE [LARGE SCALE GENOMIC DNA]</scope>
    <source>
        <strain>IP32953</strain>
    </source>
</reference>
<evidence type="ECO:0000255" key="1"/>
<evidence type="ECO:0000255" key="2">
    <source>
        <dbReference type="HAMAP-Rule" id="MF_00684"/>
    </source>
</evidence>
<proteinExistence type="inferred from homology"/>